<feature type="chain" id="PRO_0000387202" description="Ribosomal RNA small subunit methyltransferase H">
    <location>
        <begin position="1"/>
        <end position="291"/>
    </location>
</feature>
<feature type="binding site" evidence="1">
    <location>
        <begin position="31"/>
        <end position="33"/>
    </location>
    <ligand>
        <name>S-adenosyl-L-methionine</name>
        <dbReference type="ChEBI" id="CHEBI:59789"/>
    </ligand>
</feature>
<feature type="binding site" evidence="1">
    <location>
        <position position="50"/>
    </location>
    <ligand>
        <name>S-adenosyl-L-methionine</name>
        <dbReference type="ChEBI" id="CHEBI:59789"/>
    </ligand>
</feature>
<feature type="binding site" evidence="1">
    <location>
        <position position="77"/>
    </location>
    <ligand>
        <name>S-adenosyl-L-methionine</name>
        <dbReference type="ChEBI" id="CHEBI:59789"/>
    </ligand>
</feature>
<feature type="binding site" evidence="1">
    <location>
        <position position="98"/>
    </location>
    <ligand>
        <name>S-adenosyl-L-methionine</name>
        <dbReference type="ChEBI" id="CHEBI:59789"/>
    </ligand>
</feature>
<feature type="binding site" evidence="1">
    <location>
        <position position="105"/>
    </location>
    <ligand>
        <name>S-adenosyl-L-methionine</name>
        <dbReference type="ChEBI" id="CHEBI:59789"/>
    </ligand>
</feature>
<organism>
    <name type="scientific">Endomicrobium trichonymphae</name>
    <dbReference type="NCBI Taxonomy" id="1408204"/>
    <lineage>
        <taxon>Bacteria</taxon>
        <taxon>Pseudomonadati</taxon>
        <taxon>Elusimicrobiota</taxon>
        <taxon>Endomicrobiia</taxon>
        <taxon>Endomicrobiales</taxon>
        <taxon>Endomicrobiaceae</taxon>
        <taxon>Candidatus Endomicrobiellum</taxon>
    </lineage>
</organism>
<dbReference type="EC" id="2.1.1.199" evidence="1"/>
<dbReference type="EMBL" id="AP009510">
    <property type="protein sequence ID" value="BAG13660.1"/>
    <property type="molecule type" value="Genomic_DNA"/>
</dbReference>
<dbReference type="RefSeq" id="WP_015423188.1">
    <property type="nucleotide sequence ID" value="NC_020419.1"/>
</dbReference>
<dbReference type="SMR" id="B1GZH8"/>
<dbReference type="STRING" id="471821.TGRD_177"/>
<dbReference type="KEGG" id="eti:RSTT_154"/>
<dbReference type="KEGG" id="rsd:TGRD_177"/>
<dbReference type="PATRIC" id="fig|471821.5.peg.260"/>
<dbReference type="HOGENOM" id="CLU_038422_2_0_0"/>
<dbReference type="OrthoDB" id="9806637at2"/>
<dbReference type="Proteomes" id="UP000001691">
    <property type="component" value="Chromosome"/>
</dbReference>
<dbReference type="GO" id="GO:0005737">
    <property type="term" value="C:cytoplasm"/>
    <property type="evidence" value="ECO:0007669"/>
    <property type="project" value="UniProtKB-SubCell"/>
</dbReference>
<dbReference type="GO" id="GO:0071424">
    <property type="term" value="F:rRNA (cytosine-N4-)-methyltransferase activity"/>
    <property type="evidence" value="ECO:0007669"/>
    <property type="project" value="UniProtKB-UniRule"/>
</dbReference>
<dbReference type="GO" id="GO:0070475">
    <property type="term" value="P:rRNA base methylation"/>
    <property type="evidence" value="ECO:0007669"/>
    <property type="project" value="UniProtKB-UniRule"/>
</dbReference>
<dbReference type="Gene3D" id="1.10.150.170">
    <property type="entry name" value="Putative methyltransferase TM0872, insert domain"/>
    <property type="match status" value="1"/>
</dbReference>
<dbReference type="Gene3D" id="3.40.50.150">
    <property type="entry name" value="Vaccinia Virus protein VP39"/>
    <property type="match status" value="1"/>
</dbReference>
<dbReference type="HAMAP" id="MF_01007">
    <property type="entry name" value="16SrRNA_methyltr_H"/>
    <property type="match status" value="1"/>
</dbReference>
<dbReference type="InterPro" id="IPR002903">
    <property type="entry name" value="RsmH"/>
</dbReference>
<dbReference type="InterPro" id="IPR023397">
    <property type="entry name" value="SAM-dep_MeTrfase_MraW_recog"/>
</dbReference>
<dbReference type="InterPro" id="IPR029063">
    <property type="entry name" value="SAM-dependent_MTases_sf"/>
</dbReference>
<dbReference type="NCBIfam" id="TIGR00006">
    <property type="entry name" value="16S rRNA (cytosine(1402)-N(4))-methyltransferase RsmH"/>
    <property type="match status" value="1"/>
</dbReference>
<dbReference type="PANTHER" id="PTHR11265:SF0">
    <property type="entry name" value="12S RRNA N4-METHYLCYTIDINE METHYLTRANSFERASE"/>
    <property type="match status" value="1"/>
</dbReference>
<dbReference type="PANTHER" id="PTHR11265">
    <property type="entry name" value="S-ADENOSYL-METHYLTRANSFERASE MRAW"/>
    <property type="match status" value="1"/>
</dbReference>
<dbReference type="Pfam" id="PF01795">
    <property type="entry name" value="Methyltransf_5"/>
    <property type="match status" value="1"/>
</dbReference>
<dbReference type="PIRSF" id="PIRSF004486">
    <property type="entry name" value="MraW"/>
    <property type="match status" value="1"/>
</dbReference>
<dbReference type="SUPFAM" id="SSF81799">
    <property type="entry name" value="Putative methyltransferase TM0872, insert domain"/>
    <property type="match status" value="1"/>
</dbReference>
<dbReference type="SUPFAM" id="SSF53335">
    <property type="entry name" value="S-adenosyl-L-methionine-dependent methyltransferases"/>
    <property type="match status" value="1"/>
</dbReference>
<accession>B1GZH8</accession>
<sequence>MFHIPVMPLETSRYLIGKPGGLYVDCTFGGGGHALYLLDKFKDIKIVAFDWDEDSSKRFIEREKEFSGRVTFIRDNFKNVKKALSALNISKVDGILADIGVSSKQFGDLDRGFSFNSGTLDMRMDKRNGFEAKEVVNSYSYEDLADIFYKYGEERKSRQIASAILLRRKRGIINTASELQTVICSVKRPEGRINPATKVFQALRIFVNSELENLAVLLSDAPELLNAGGRTVIISFHSLEDRIVKQNFKRNSECGIYKILTKKVVTALKEEVKINPGSRSARIRAAEKTSV</sequence>
<reference key="1">
    <citation type="journal article" date="2008" name="Proc. Natl. Acad. Sci. U.S.A.">
        <title>Complete genome of the uncultured termite group 1 bacteria in a single host protist cell.</title>
        <authorList>
            <person name="Hongoh Y."/>
            <person name="Sharma V.K."/>
            <person name="Prakash T."/>
            <person name="Noda S."/>
            <person name="Taylor T.D."/>
            <person name="Kudo T."/>
            <person name="Sakaki Y."/>
            <person name="Toyoda A."/>
            <person name="Hattori M."/>
            <person name="Ohkuma M."/>
        </authorList>
    </citation>
    <scope>NUCLEOTIDE SEQUENCE [LARGE SCALE GENOMIC DNA]</scope>
</reference>
<keyword id="KW-0963">Cytoplasm</keyword>
<keyword id="KW-0489">Methyltransferase</keyword>
<keyword id="KW-0698">rRNA processing</keyword>
<keyword id="KW-0949">S-adenosyl-L-methionine</keyword>
<keyword id="KW-0808">Transferase</keyword>
<name>RSMH_ENDTX</name>
<comment type="function">
    <text evidence="1">Specifically methylates the N4 position of cytidine in position 1402 (C1402) of 16S rRNA.</text>
</comment>
<comment type="catalytic activity">
    <reaction evidence="1">
        <text>cytidine(1402) in 16S rRNA + S-adenosyl-L-methionine = N(4)-methylcytidine(1402) in 16S rRNA + S-adenosyl-L-homocysteine + H(+)</text>
        <dbReference type="Rhea" id="RHEA:42928"/>
        <dbReference type="Rhea" id="RHEA-COMP:10286"/>
        <dbReference type="Rhea" id="RHEA-COMP:10287"/>
        <dbReference type="ChEBI" id="CHEBI:15378"/>
        <dbReference type="ChEBI" id="CHEBI:57856"/>
        <dbReference type="ChEBI" id="CHEBI:59789"/>
        <dbReference type="ChEBI" id="CHEBI:74506"/>
        <dbReference type="ChEBI" id="CHEBI:82748"/>
        <dbReference type="EC" id="2.1.1.199"/>
    </reaction>
</comment>
<comment type="subcellular location">
    <subcellularLocation>
        <location evidence="1">Cytoplasm</location>
    </subcellularLocation>
</comment>
<comment type="similarity">
    <text evidence="1">Belongs to the methyltransferase superfamily. RsmH family.</text>
</comment>
<evidence type="ECO:0000255" key="1">
    <source>
        <dbReference type="HAMAP-Rule" id="MF_01007"/>
    </source>
</evidence>
<protein>
    <recommendedName>
        <fullName evidence="1">Ribosomal RNA small subunit methyltransferase H</fullName>
        <ecNumber evidence="1">2.1.1.199</ecNumber>
    </recommendedName>
    <alternativeName>
        <fullName evidence="1">16S rRNA m(4)C1402 methyltransferase</fullName>
    </alternativeName>
    <alternativeName>
        <fullName evidence="1">rRNA (cytosine-N(4)-)-methyltransferase RsmH</fullName>
    </alternativeName>
</protein>
<proteinExistence type="inferred from homology"/>
<gene>
    <name evidence="1" type="primary">rsmH</name>
    <name type="synonym">mraW</name>
    <name type="ordered locus">TGRD_177</name>
</gene>